<dbReference type="EMBL" id="AL954747">
    <property type="protein sequence ID" value="CAD85484.1"/>
    <property type="molecule type" value="Genomic_DNA"/>
</dbReference>
<dbReference type="RefSeq" id="WP_011112137.1">
    <property type="nucleotide sequence ID" value="NC_004757.1"/>
</dbReference>
<dbReference type="SMR" id="Q82UC1"/>
<dbReference type="STRING" id="228410.NE1573"/>
<dbReference type="GeneID" id="87104741"/>
<dbReference type="KEGG" id="neu:NE1573"/>
<dbReference type="eggNOG" id="COG2967">
    <property type="taxonomic scope" value="Bacteria"/>
</dbReference>
<dbReference type="HOGENOM" id="CLU_128074_0_0_4"/>
<dbReference type="OrthoDB" id="9795226at2"/>
<dbReference type="PhylomeDB" id="Q82UC1"/>
<dbReference type="Proteomes" id="UP000001416">
    <property type="component" value="Chromosome"/>
</dbReference>
<dbReference type="GO" id="GO:0070987">
    <property type="term" value="P:error-free translesion synthesis"/>
    <property type="evidence" value="ECO:0007669"/>
    <property type="project" value="TreeGrafter"/>
</dbReference>
<dbReference type="Gene3D" id="2.60.40.1470">
    <property type="entry name" value="ApaG domain"/>
    <property type="match status" value="1"/>
</dbReference>
<dbReference type="HAMAP" id="MF_00791">
    <property type="entry name" value="ApaG"/>
    <property type="match status" value="1"/>
</dbReference>
<dbReference type="InterPro" id="IPR007474">
    <property type="entry name" value="ApaG_domain"/>
</dbReference>
<dbReference type="InterPro" id="IPR036767">
    <property type="entry name" value="ApaG_sf"/>
</dbReference>
<dbReference type="InterPro" id="IPR023065">
    <property type="entry name" value="Uncharacterised_ApaG"/>
</dbReference>
<dbReference type="NCBIfam" id="NF003967">
    <property type="entry name" value="PRK05461.1"/>
    <property type="match status" value="1"/>
</dbReference>
<dbReference type="PANTHER" id="PTHR14289">
    <property type="entry name" value="F-BOX ONLY PROTEIN 3"/>
    <property type="match status" value="1"/>
</dbReference>
<dbReference type="PANTHER" id="PTHR14289:SF16">
    <property type="entry name" value="POLYMERASE DELTA-INTERACTING PROTEIN 2"/>
    <property type="match status" value="1"/>
</dbReference>
<dbReference type="Pfam" id="PF04379">
    <property type="entry name" value="DUF525"/>
    <property type="match status" value="1"/>
</dbReference>
<dbReference type="SUPFAM" id="SSF110069">
    <property type="entry name" value="ApaG-like"/>
    <property type="match status" value="1"/>
</dbReference>
<dbReference type="PROSITE" id="PS51087">
    <property type="entry name" value="APAG"/>
    <property type="match status" value="1"/>
</dbReference>
<reference key="1">
    <citation type="journal article" date="2003" name="J. Bacteriol.">
        <title>Complete genome sequence of the ammonia-oxidizing bacterium and obligate chemolithoautotroph Nitrosomonas europaea.</title>
        <authorList>
            <person name="Chain P."/>
            <person name="Lamerdin J.E."/>
            <person name="Larimer F.W."/>
            <person name="Regala W."/>
            <person name="Lao V."/>
            <person name="Land M.L."/>
            <person name="Hauser L."/>
            <person name="Hooper A.B."/>
            <person name="Klotz M.G."/>
            <person name="Norton J."/>
            <person name="Sayavedra-Soto L.A."/>
            <person name="Arciero D.M."/>
            <person name="Hommes N.G."/>
            <person name="Whittaker M.M."/>
            <person name="Arp D.J."/>
        </authorList>
    </citation>
    <scope>NUCLEOTIDE SEQUENCE [LARGE SCALE GENOMIC DNA]</scope>
    <source>
        <strain>ATCC 19718 / CIP 103999 / KCTC 2705 / NBRC 14298</strain>
    </source>
</reference>
<accession>Q82UC1</accession>
<keyword id="KW-1185">Reference proteome</keyword>
<protein>
    <recommendedName>
        <fullName evidence="1">Protein ApaG</fullName>
    </recommendedName>
</protein>
<name>APAG_NITEU</name>
<proteinExistence type="inferred from homology"/>
<gene>
    <name evidence="1" type="primary">apaG</name>
    <name type="ordered locus">NE1573</name>
</gene>
<sequence length="127" mass="14086">MENERKYSIKVEVRTIYLPDQSDPEAERYVFAYTITINNTGSVASQLVSRHWIITSGDGVTREVRGLGVVGEQPLLKPGETFEYTSGTAISSIAGSMKGSYQMVAEDGFHFSVEIPEFILSVPRVLH</sequence>
<feature type="chain" id="PRO_0000197950" description="Protein ApaG">
    <location>
        <begin position="1"/>
        <end position="127"/>
    </location>
</feature>
<feature type="domain" description="ApaG" evidence="1">
    <location>
        <begin position="3"/>
        <end position="127"/>
    </location>
</feature>
<evidence type="ECO:0000255" key="1">
    <source>
        <dbReference type="HAMAP-Rule" id="MF_00791"/>
    </source>
</evidence>
<organism>
    <name type="scientific">Nitrosomonas europaea (strain ATCC 19718 / CIP 103999 / KCTC 2705 / NBRC 14298)</name>
    <dbReference type="NCBI Taxonomy" id="228410"/>
    <lineage>
        <taxon>Bacteria</taxon>
        <taxon>Pseudomonadati</taxon>
        <taxon>Pseudomonadota</taxon>
        <taxon>Betaproteobacteria</taxon>
        <taxon>Nitrosomonadales</taxon>
        <taxon>Nitrosomonadaceae</taxon>
        <taxon>Nitrosomonas</taxon>
    </lineage>
</organism>